<protein>
    <recommendedName>
        <fullName evidence="1">Bifunctional protein FolD</fullName>
    </recommendedName>
    <domain>
        <recommendedName>
            <fullName evidence="1">Methylenetetrahydrofolate dehydrogenase</fullName>
            <ecNumber evidence="1">1.5.1.5</ecNumber>
        </recommendedName>
    </domain>
    <domain>
        <recommendedName>
            <fullName evidence="1">Methenyltetrahydrofolate cyclohydrolase</fullName>
            <ecNumber evidence="1">3.5.4.9</ecNumber>
        </recommendedName>
    </domain>
</protein>
<accession>Q9K966</accession>
<gene>
    <name evidence="1" type="primary">folD</name>
    <name type="ordered locus">BH2784</name>
</gene>
<organism>
    <name type="scientific">Halalkalibacterium halodurans (strain ATCC BAA-125 / DSM 18197 / FERM 7344 / JCM 9153 / C-125)</name>
    <name type="common">Bacillus halodurans</name>
    <dbReference type="NCBI Taxonomy" id="272558"/>
    <lineage>
        <taxon>Bacteria</taxon>
        <taxon>Bacillati</taxon>
        <taxon>Bacillota</taxon>
        <taxon>Bacilli</taxon>
        <taxon>Bacillales</taxon>
        <taxon>Bacillaceae</taxon>
        <taxon>Halalkalibacterium (ex Joshi et al. 2022)</taxon>
    </lineage>
</organism>
<feature type="chain" id="PRO_0000268270" description="Bifunctional protein FolD">
    <location>
        <begin position="1"/>
        <end position="279"/>
    </location>
</feature>
<feature type="binding site" evidence="1">
    <location>
        <begin position="165"/>
        <end position="167"/>
    </location>
    <ligand>
        <name>NADP(+)</name>
        <dbReference type="ChEBI" id="CHEBI:58349"/>
    </ligand>
</feature>
<feature type="binding site" evidence="1">
    <location>
        <position position="190"/>
    </location>
    <ligand>
        <name>NADP(+)</name>
        <dbReference type="ChEBI" id="CHEBI:58349"/>
    </ligand>
</feature>
<feature type="binding site" evidence="1">
    <location>
        <position position="231"/>
    </location>
    <ligand>
        <name>NADP(+)</name>
        <dbReference type="ChEBI" id="CHEBI:58349"/>
    </ligand>
</feature>
<reference key="1">
    <citation type="journal article" date="2000" name="Nucleic Acids Res.">
        <title>Complete genome sequence of the alkaliphilic bacterium Bacillus halodurans and genomic sequence comparison with Bacillus subtilis.</title>
        <authorList>
            <person name="Takami H."/>
            <person name="Nakasone K."/>
            <person name="Takaki Y."/>
            <person name="Maeno G."/>
            <person name="Sasaki R."/>
            <person name="Masui N."/>
            <person name="Fuji F."/>
            <person name="Hirama C."/>
            <person name="Nakamura Y."/>
            <person name="Ogasawara N."/>
            <person name="Kuhara S."/>
            <person name="Horikoshi K."/>
        </authorList>
    </citation>
    <scope>NUCLEOTIDE SEQUENCE [LARGE SCALE GENOMIC DNA]</scope>
    <source>
        <strain>ATCC BAA-125 / DSM 18197 / FERM 7344 / JCM 9153 / C-125</strain>
    </source>
</reference>
<evidence type="ECO:0000255" key="1">
    <source>
        <dbReference type="HAMAP-Rule" id="MF_01576"/>
    </source>
</evidence>
<keyword id="KW-0028">Amino-acid biosynthesis</keyword>
<keyword id="KW-0368">Histidine biosynthesis</keyword>
<keyword id="KW-0378">Hydrolase</keyword>
<keyword id="KW-0486">Methionine biosynthesis</keyword>
<keyword id="KW-0511">Multifunctional enzyme</keyword>
<keyword id="KW-0521">NADP</keyword>
<keyword id="KW-0554">One-carbon metabolism</keyword>
<keyword id="KW-0560">Oxidoreductase</keyword>
<keyword id="KW-0658">Purine biosynthesis</keyword>
<keyword id="KW-1185">Reference proteome</keyword>
<comment type="function">
    <text evidence="1">Catalyzes the oxidation of 5,10-methylenetetrahydrofolate to 5,10-methenyltetrahydrofolate and then the hydrolysis of 5,10-methenyltetrahydrofolate to 10-formyltetrahydrofolate.</text>
</comment>
<comment type="catalytic activity">
    <reaction evidence="1">
        <text>(6R)-5,10-methylene-5,6,7,8-tetrahydrofolate + NADP(+) = (6R)-5,10-methenyltetrahydrofolate + NADPH</text>
        <dbReference type="Rhea" id="RHEA:22812"/>
        <dbReference type="ChEBI" id="CHEBI:15636"/>
        <dbReference type="ChEBI" id="CHEBI:57455"/>
        <dbReference type="ChEBI" id="CHEBI:57783"/>
        <dbReference type="ChEBI" id="CHEBI:58349"/>
        <dbReference type="EC" id="1.5.1.5"/>
    </reaction>
</comment>
<comment type="catalytic activity">
    <reaction evidence="1">
        <text>(6R)-5,10-methenyltetrahydrofolate + H2O = (6R)-10-formyltetrahydrofolate + H(+)</text>
        <dbReference type="Rhea" id="RHEA:23700"/>
        <dbReference type="ChEBI" id="CHEBI:15377"/>
        <dbReference type="ChEBI" id="CHEBI:15378"/>
        <dbReference type="ChEBI" id="CHEBI:57455"/>
        <dbReference type="ChEBI" id="CHEBI:195366"/>
        <dbReference type="EC" id="3.5.4.9"/>
    </reaction>
</comment>
<comment type="pathway">
    <text evidence="1">One-carbon metabolism; tetrahydrofolate interconversion.</text>
</comment>
<comment type="subunit">
    <text evidence="1">Homodimer.</text>
</comment>
<comment type="similarity">
    <text evidence="1">Belongs to the tetrahydrofolate dehydrogenase/cyclohydrolase family.</text>
</comment>
<sequence>MSAVLLDGKALAAKKRDELKSEVTKLKERGITPGLAVILVGNDPASTVYVRSKQKACEQIGIYSVLKELPASTSEEELLTEIDRLNNDPTIHGILVQLPLPEQISEQAVIERISPAKDVDGFHPISVGRMMIGEDTFLPCTPFGVLVMLQEANVEIAGKHVVVVGRSNIVGKPVGQLMLNEHATVTYCHSRTKNLTEITKQADILIVAVGRARFIDASHVKEGAVVIDVGINRVDGKLCGDVDFESVREVASHLTPVPGGVGPMTITMLLANTIQAAKE</sequence>
<proteinExistence type="inferred from homology"/>
<dbReference type="EC" id="1.5.1.5" evidence="1"/>
<dbReference type="EC" id="3.5.4.9" evidence="1"/>
<dbReference type="EMBL" id="BA000004">
    <property type="protein sequence ID" value="BAB06503.1"/>
    <property type="molecule type" value="Genomic_DNA"/>
</dbReference>
<dbReference type="PIR" id="H83997">
    <property type="entry name" value="H83997"/>
</dbReference>
<dbReference type="RefSeq" id="WP_010898932.1">
    <property type="nucleotide sequence ID" value="NC_002570.2"/>
</dbReference>
<dbReference type="SMR" id="Q9K966"/>
<dbReference type="STRING" id="272558.gene:10728684"/>
<dbReference type="KEGG" id="bha:BH2784"/>
<dbReference type="eggNOG" id="COG0190">
    <property type="taxonomic scope" value="Bacteria"/>
</dbReference>
<dbReference type="HOGENOM" id="CLU_034045_2_1_9"/>
<dbReference type="OrthoDB" id="9803580at2"/>
<dbReference type="UniPathway" id="UPA00193"/>
<dbReference type="Proteomes" id="UP000001258">
    <property type="component" value="Chromosome"/>
</dbReference>
<dbReference type="GO" id="GO:0005829">
    <property type="term" value="C:cytosol"/>
    <property type="evidence" value="ECO:0007669"/>
    <property type="project" value="TreeGrafter"/>
</dbReference>
<dbReference type="GO" id="GO:0004477">
    <property type="term" value="F:methenyltetrahydrofolate cyclohydrolase activity"/>
    <property type="evidence" value="ECO:0007669"/>
    <property type="project" value="UniProtKB-UniRule"/>
</dbReference>
<dbReference type="GO" id="GO:0004488">
    <property type="term" value="F:methylenetetrahydrofolate dehydrogenase (NADP+) activity"/>
    <property type="evidence" value="ECO:0007669"/>
    <property type="project" value="UniProtKB-UniRule"/>
</dbReference>
<dbReference type="GO" id="GO:0000105">
    <property type="term" value="P:L-histidine biosynthetic process"/>
    <property type="evidence" value="ECO:0007669"/>
    <property type="project" value="UniProtKB-KW"/>
</dbReference>
<dbReference type="GO" id="GO:0009086">
    <property type="term" value="P:methionine biosynthetic process"/>
    <property type="evidence" value="ECO:0007669"/>
    <property type="project" value="UniProtKB-KW"/>
</dbReference>
<dbReference type="GO" id="GO:0006164">
    <property type="term" value="P:purine nucleotide biosynthetic process"/>
    <property type="evidence" value="ECO:0007669"/>
    <property type="project" value="UniProtKB-KW"/>
</dbReference>
<dbReference type="GO" id="GO:0035999">
    <property type="term" value="P:tetrahydrofolate interconversion"/>
    <property type="evidence" value="ECO:0007669"/>
    <property type="project" value="UniProtKB-UniRule"/>
</dbReference>
<dbReference type="CDD" id="cd01080">
    <property type="entry name" value="NAD_bind_m-THF_DH_Cyclohyd"/>
    <property type="match status" value="1"/>
</dbReference>
<dbReference type="FunFam" id="3.40.50.10860:FF:000001">
    <property type="entry name" value="Bifunctional protein FolD"/>
    <property type="match status" value="1"/>
</dbReference>
<dbReference type="FunFam" id="3.40.50.720:FF:000094">
    <property type="entry name" value="Bifunctional protein FolD"/>
    <property type="match status" value="1"/>
</dbReference>
<dbReference type="Gene3D" id="3.40.50.10860">
    <property type="entry name" value="Leucine Dehydrogenase, chain A, domain 1"/>
    <property type="match status" value="1"/>
</dbReference>
<dbReference type="Gene3D" id="3.40.50.720">
    <property type="entry name" value="NAD(P)-binding Rossmann-like Domain"/>
    <property type="match status" value="1"/>
</dbReference>
<dbReference type="HAMAP" id="MF_01576">
    <property type="entry name" value="THF_DHG_CYH"/>
    <property type="match status" value="1"/>
</dbReference>
<dbReference type="InterPro" id="IPR046346">
    <property type="entry name" value="Aminoacid_DH-like_N_sf"/>
</dbReference>
<dbReference type="InterPro" id="IPR036291">
    <property type="entry name" value="NAD(P)-bd_dom_sf"/>
</dbReference>
<dbReference type="InterPro" id="IPR000672">
    <property type="entry name" value="THF_DH/CycHdrlase"/>
</dbReference>
<dbReference type="InterPro" id="IPR020630">
    <property type="entry name" value="THF_DH/CycHdrlase_cat_dom"/>
</dbReference>
<dbReference type="InterPro" id="IPR020867">
    <property type="entry name" value="THF_DH/CycHdrlase_CS"/>
</dbReference>
<dbReference type="InterPro" id="IPR020631">
    <property type="entry name" value="THF_DH/CycHdrlase_NAD-bd_dom"/>
</dbReference>
<dbReference type="NCBIfam" id="NF008058">
    <property type="entry name" value="PRK10792.1"/>
    <property type="match status" value="1"/>
</dbReference>
<dbReference type="NCBIfam" id="NF010783">
    <property type="entry name" value="PRK14186.1"/>
    <property type="match status" value="1"/>
</dbReference>
<dbReference type="PANTHER" id="PTHR48099:SF5">
    <property type="entry name" value="C-1-TETRAHYDROFOLATE SYNTHASE, CYTOPLASMIC"/>
    <property type="match status" value="1"/>
</dbReference>
<dbReference type="PANTHER" id="PTHR48099">
    <property type="entry name" value="C-1-TETRAHYDROFOLATE SYNTHASE, CYTOPLASMIC-RELATED"/>
    <property type="match status" value="1"/>
</dbReference>
<dbReference type="Pfam" id="PF00763">
    <property type="entry name" value="THF_DHG_CYH"/>
    <property type="match status" value="1"/>
</dbReference>
<dbReference type="Pfam" id="PF02882">
    <property type="entry name" value="THF_DHG_CYH_C"/>
    <property type="match status" value="1"/>
</dbReference>
<dbReference type="PRINTS" id="PR00085">
    <property type="entry name" value="THFDHDRGNASE"/>
</dbReference>
<dbReference type="SUPFAM" id="SSF53223">
    <property type="entry name" value="Aminoacid dehydrogenase-like, N-terminal domain"/>
    <property type="match status" value="1"/>
</dbReference>
<dbReference type="SUPFAM" id="SSF51735">
    <property type="entry name" value="NAD(P)-binding Rossmann-fold domains"/>
    <property type="match status" value="1"/>
</dbReference>
<dbReference type="PROSITE" id="PS00766">
    <property type="entry name" value="THF_DHG_CYH_1"/>
    <property type="match status" value="1"/>
</dbReference>
<dbReference type="PROSITE" id="PS00767">
    <property type="entry name" value="THF_DHG_CYH_2"/>
    <property type="match status" value="1"/>
</dbReference>
<name>FOLD_HALH5</name>